<gene>
    <name evidence="2" type="primary">psbL</name>
</gene>
<comment type="function">
    <text evidence="2">One of the components of the core complex of photosystem II (PSII). PSII is a light-driven water:plastoquinone oxidoreductase that uses light energy to abstract electrons from H(2)O, generating O(2) and a proton gradient subsequently used for ATP formation. It consists of a core antenna complex that captures photons, and an electron transfer chain that converts photonic excitation into a charge separation. This subunit is found at the monomer-monomer interface and is required for correct PSII assembly and/or dimerization.</text>
</comment>
<comment type="subunit">
    <text evidence="2">PSII is composed of 1 copy each of membrane proteins PsbA, PsbB, PsbC, PsbD, PsbE, PsbF, PsbH, PsbI, PsbJ, PsbK, PsbL, PsbM, PsbT, PsbX, PsbY, PsbZ, Psb30/Ycf12, at least 3 peripheral proteins of the oxygen-evolving complex and a large number of cofactors. It forms dimeric complexes.</text>
</comment>
<comment type="subcellular location">
    <subcellularLocation>
        <location evidence="2">Plastid</location>
        <location evidence="2">Chloroplast thylakoid membrane</location>
        <topology evidence="2">Single-pass membrane protein</topology>
    </subcellularLocation>
</comment>
<comment type="RNA editing">
    <location>
        <position position="1" evidence="1"/>
    </location>
    <text evidence="1">The initiator methionine is created by RNA editing.</text>
</comment>
<comment type="similarity">
    <text evidence="2">Belongs to the PsbL family.</text>
</comment>
<sequence length="38" mass="4497">MTQSNPNEQNVELNRTSLYWGLLLIFVLAVLFSNYFFN</sequence>
<feature type="chain" id="PRO_0000276222" description="Photosystem II reaction center protein L">
    <location>
        <begin position="1"/>
        <end position="38"/>
    </location>
</feature>
<feature type="transmembrane region" description="Helical" evidence="2">
    <location>
        <begin position="17"/>
        <end position="37"/>
    </location>
</feature>
<organism>
    <name type="scientific">Solanum lycopersicum</name>
    <name type="common">Tomato</name>
    <name type="synonym">Lycopersicon esculentum</name>
    <dbReference type="NCBI Taxonomy" id="4081"/>
    <lineage>
        <taxon>Eukaryota</taxon>
        <taxon>Viridiplantae</taxon>
        <taxon>Streptophyta</taxon>
        <taxon>Embryophyta</taxon>
        <taxon>Tracheophyta</taxon>
        <taxon>Spermatophyta</taxon>
        <taxon>Magnoliopsida</taxon>
        <taxon>eudicotyledons</taxon>
        <taxon>Gunneridae</taxon>
        <taxon>Pentapetalae</taxon>
        <taxon>asterids</taxon>
        <taxon>lamiids</taxon>
        <taxon>Solanales</taxon>
        <taxon>Solanaceae</taxon>
        <taxon>Solanoideae</taxon>
        <taxon>Solaneae</taxon>
        <taxon>Solanum</taxon>
        <taxon>Solanum subgen. Lycopersicon</taxon>
    </lineage>
</organism>
<evidence type="ECO:0000250" key="1"/>
<evidence type="ECO:0000255" key="2">
    <source>
        <dbReference type="HAMAP-Rule" id="MF_01317"/>
    </source>
</evidence>
<accession>Q2A7F4</accession>
<accession>Q2MI85</accession>
<geneLocation type="chloroplast"/>
<reference key="1">
    <citation type="journal article" date="2006" name="Theor. Appl. Genet.">
        <title>Complete chloroplast genome sequences of Solanum bulbocastanum, Solanum lycopersicum and comparative analyses with other Solanaceae genomes.</title>
        <authorList>
            <person name="Daniell H."/>
            <person name="Lee S.-B."/>
            <person name="Grevich J."/>
            <person name="Saski C."/>
            <person name="Quesada-Vargas T."/>
            <person name="Guda C."/>
            <person name="Tomkins J."/>
            <person name="Jansen R.K."/>
        </authorList>
    </citation>
    <scope>NUCLEOTIDE SEQUENCE [LARGE SCALE GENOMIC DNA]</scope>
    <source>
        <strain>cv. LA3023</strain>
    </source>
</reference>
<reference key="2">
    <citation type="journal article" date="2006" name="J. Mol. Evol.">
        <title>Sequence of the tomato chloroplast DNA and evolutionary comparison of solanaceous plastid genomes.</title>
        <authorList>
            <person name="Kahlau S."/>
            <person name="Aspinall S."/>
            <person name="Gray J.C."/>
            <person name="Bock R."/>
        </authorList>
    </citation>
    <scope>NUCLEOTIDE SEQUENCE [LARGE SCALE GENOMIC DNA]</scope>
    <source>
        <strain>cv. IPA-6</strain>
    </source>
</reference>
<proteinExistence type="inferred from homology"/>
<name>PSBL_SOLLC</name>
<keyword id="KW-0150">Chloroplast</keyword>
<keyword id="KW-0472">Membrane</keyword>
<keyword id="KW-0602">Photosynthesis</keyword>
<keyword id="KW-0604">Photosystem II</keyword>
<keyword id="KW-0934">Plastid</keyword>
<keyword id="KW-0674">Reaction center</keyword>
<keyword id="KW-1185">Reference proteome</keyword>
<keyword id="KW-0691">RNA editing</keyword>
<keyword id="KW-0793">Thylakoid</keyword>
<keyword id="KW-0812">Transmembrane</keyword>
<keyword id="KW-1133">Transmembrane helix</keyword>
<protein>
    <recommendedName>
        <fullName evidence="2">Photosystem II reaction center protein L</fullName>
        <shortName evidence="2">PSII-L</shortName>
    </recommendedName>
</protein>
<dbReference type="EMBL" id="DQ347959">
    <property type="protein sequence ID" value="ABC56315.1"/>
    <property type="status" value="ALT_SEQ"/>
    <property type="molecule type" value="Genomic_DNA"/>
</dbReference>
<dbReference type="EMBL" id="AM087200">
    <property type="protein sequence ID" value="CAJ32408.3"/>
    <property type="molecule type" value="Genomic_DNA"/>
</dbReference>
<dbReference type="RefSeq" id="AP_004943.1">
    <property type="nucleotide sequence ID" value="AC_000188.1"/>
</dbReference>
<dbReference type="RefSeq" id="YP_008563103.1">
    <property type="nucleotide sequence ID" value="NC_007898.3"/>
</dbReference>
<dbReference type="SMR" id="Q2A7F4"/>
<dbReference type="FunCoup" id="Q2A7F4">
    <property type="interactions" value="86"/>
</dbReference>
<dbReference type="STRING" id="4081.Q2A7F4"/>
<dbReference type="GeneID" id="3950454"/>
<dbReference type="KEGG" id="sly:3950454"/>
<dbReference type="InParanoid" id="Q2A7F4"/>
<dbReference type="OrthoDB" id="99at2759"/>
<dbReference type="Proteomes" id="UP000004994">
    <property type="component" value="Chloroplast"/>
</dbReference>
<dbReference type="GO" id="GO:0009535">
    <property type="term" value="C:chloroplast thylakoid membrane"/>
    <property type="evidence" value="ECO:0007669"/>
    <property type="project" value="UniProtKB-SubCell"/>
</dbReference>
<dbReference type="GO" id="GO:0009539">
    <property type="term" value="C:photosystem II reaction center"/>
    <property type="evidence" value="ECO:0007669"/>
    <property type="project" value="InterPro"/>
</dbReference>
<dbReference type="GO" id="GO:0015979">
    <property type="term" value="P:photosynthesis"/>
    <property type="evidence" value="ECO:0007669"/>
    <property type="project" value="UniProtKB-UniRule"/>
</dbReference>
<dbReference type="HAMAP" id="MF_01317">
    <property type="entry name" value="PSII_PsbL"/>
    <property type="match status" value="1"/>
</dbReference>
<dbReference type="InterPro" id="IPR003372">
    <property type="entry name" value="PSII_PsbL"/>
</dbReference>
<dbReference type="InterPro" id="IPR037266">
    <property type="entry name" value="PSII_PsbL_sf"/>
</dbReference>
<dbReference type="NCBIfam" id="NF001972">
    <property type="entry name" value="PRK00753.1"/>
    <property type="match status" value="1"/>
</dbReference>
<dbReference type="Pfam" id="PF02419">
    <property type="entry name" value="PsbL"/>
    <property type="match status" value="1"/>
</dbReference>
<dbReference type="SUPFAM" id="SSF161017">
    <property type="entry name" value="Photosystem II reaction center protein L, PsbL"/>
    <property type="match status" value="1"/>
</dbReference>